<organism>
    <name type="scientific">Aspergillus terreus (strain NIH 2624 / FGSC A1156)</name>
    <dbReference type="NCBI Taxonomy" id="341663"/>
    <lineage>
        <taxon>Eukaryota</taxon>
        <taxon>Fungi</taxon>
        <taxon>Dikarya</taxon>
        <taxon>Ascomycota</taxon>
        <taxon>Pezizomycotina</taxon>
        <taxon>Eurotiomycetes</taxon>
        <taxon>Eurotiomycetidae</taxon>
        <taxon>Eurotiales</taxon>
        <taxon>Aspergillaceae</taxon>
        <taxon>Aspergillus</taxon>
        <taxon>Aspergillus subgen. Circumdati</taxon>
    </lineage>
</organism>
<accession>Q0CLJ6</accession>
<comment type="function">
    <text evidence="1">ATP-binding RNA helicase involved in translation initiation. Remodels RNA in response to ADP and ATP concentrations by facilitating disruption, but also formation of RNA duplexes (By similarity).</text>
</comment>
<comment type="catalytic activity">
    <reaction>
        <text>ATP + H2O = ADP + phosphate + H(+)</text>
        <dbReference type="Rhea" id="RHEA:13065"/>
        <dbReference type="ChEBI" id="CHEBI:15377"/>
        <dbReference type="ChEBI" id="CHEBI:15378"/>
        <dbReference type="ChEBI" id="CHEBI:30616"/>
        <dbReference type="ChEBI" id="CHEBI:43474"/>
        <dbReference type="ChEBI" id="CHEBI:456216"/>
        <dbReference type="EC" id="3.6.4.13"/>
    </reaction>
</comment>
<comment type="subcellular location">
    <subcellularLocation>
        <location evidence="1">Cytoplasm</location>
    </subcellularLocation>
</comment>
<comment type="domain">
    <text>The Q motif is unique to and characteristic of the DEAD box family of RNA helicases and controls ATP binding and hydrolysis.</text>
</comment>
<comment type="similarity">
    <text evidence="5">Belongs to the DEAD box helicase family. DDX3/DED1 subfamily.</text>
</comment>
<evidence type="ECO:0000250" key="1"/>
<evidence type="ECO:0000255" key="2">
    <source>
        <dbReference type="PROSITE-ProRule" id="PRU00541"/>
    </source>
</evidence>
<evidence type="ECO:0000255" key="3">
    <source>
        <dbReference type="PROSITE-ProRule" id="PRU00542"/>
    </source>
</evidence>
<evidence type="ECO:0000256" key="4">
    <source>
        <dbReference type="SAM" id="MobiDB-lite"/>
    </source>
</evidence>
<evidence type="ECO:0000305" key="5"/>
<name>DED1_ASPTN</name>
<reference key="1">
    <citation type="submission" date="2005-09" db="EMBL/GenBank/DDBJ databases">
        <title>Annotation of the Aspergillus terreus NIH2624 genome.</title>
        <authorList>
            <person name="Birren B.W."/>
            <person name="Lander E.S."/>
            <person name="Galagan J.E."/>
            <person name="Nusbaum C."/>
            <person name="Devon K."/>
            <person name="Henn M."/>
            <person name="Ma L.-J."/>
            <person name="Jaffe D.B."/>
            <person name="Butler J."/>
            <person name="Alvarez P."/>
            <person name="Gnerre S."/>
            <person name="Grabherr M."/>
            <person name="Kleber M."/>
            <person name="Mauceli E.W."/>
            <person name="Brockman W."/>
            <person name="Rounsley S."/>
            <person name="Young S.K."/>
            <person name="LaButti K."/>
            <person name="Pushparaj V."/>
            <person name="DeCaprio D."/>
            <person name="Crawford M."/>
            <person name="Koehrsen M."/>
            <person name="Engels R."/>
            <person name="Montgomery P."/>
            <person name="Pearson M."/>
            <person name="Howarth C."/>
            <person name="Larson L."/>
            <person name="Luoma S."/>
            <person name="White J."/>
            <person name="Alvarado L."/>
            <person name="Kodira C.D."/>
            <person name="Zeng Q."/>
            <person name="Oleary S."/>
            <person name="Yandava C."/>
            <person name="Denning D.W."/>
            <person name="Nierman W.C."/>
            <person name="Milne T."/>
            <person name="Madden K."/>
        </authorList>
    </citation>
    <scope>NUCLEOTIDE SEQUENCE [LARGE SCALE GENOMIC DNA]</scope>
    <source>
        <strain>NIH 2624 / FGSC A1156</strain>
    </source>
</reference>
<keyword id="KW-0067">ATP-binding</keyword>
<keyword id="KW-0963">Cytoplasm</keyword>
<keyword id="KW-0347">Helicase</keyword>
<keyword id="KW-0378">Hydrolase</keyword>
<keyword id="KW-0396">Initiation factor</keyword>
<keyword id="KW-0547">Nucleotide-binding</keyword>
<keyword id="KW-0648">Protein biosynthesis</keyword>
<keyword id="KW-1185">Reference proteome</keyword>
<keyword id="KW-0694">RNA-binding</keyword>
<sequence>MADSLKMGNLSLNESQHAPAPSTASSGRAAYIPPHLRQRQMGANMDGAAPPPPGPAAAAPPQAGGSWGARPPRGGNWANANDFSPRGPNGNTSWTPTDGLRRPFNPNAYGNPGHGGGGSSSSYARGSGDGQWRDGKHIPGPPNPRVERELFGLPNDPSKQSTGINFANYDDIPVEASGQDVPEPVNAFTNPPLDDHLISNIALARYLTPTPVQKYSIPIVMNGRDLMACAQTGSGKTGGFLFPILSQAFQNGPSPTPAPAGGQLGYGRQRKAYPTSLILAPTRELVSQIFDEARKFAYRSWVRPCVVYGGADIGSQLRQIERGCDLLVATPGRLVDLIERGRISLVNIKYLILDEADRMLDMGFEPQIRRIVEGEDMPHVNDRQTLMFSATFPRDIQMLARDFLKDYVFLSVGRVGSTSENITQKVEYVEDHDKRSVLLDILHTHGTSGLTLIFVETKRMADSLSDFLLNQRFPATAIHGDRTQRERERALEMFRSGRCPILVATAVAASGLDIPNVTHVINYDLPTDIDDYVHRIGRTGRAGNTGIATAFFNRGNRGVVRDLIDLLKEAHQEVPTFLESIAREGSGYGGRGGRGGRGRGGNATRDMRRFGGGGGGMGSAPSYGGGYGGGAGGYSSGGGGSFGGAPSYGGGYGGGYGGGSYGNPSGPTGPSSWW</sequence>
<feature type="chain" id="PRO_0000281688" description="ATP-dependent RNA helicase ded1">
    <location>
        <begin position="1"/>
        <end position="674"/>
    </location>
</feature>
<feature type="domain" description="Helicase ATP-binding" evidence="2">
    <location>
        <begin position="217"/>
        <end position="410"/>
    </location>
</feature>
<feature type="domain" description="Helicase C-terminal" evidence="3">
    <location>
        <begin position="421"/>
        <end position="582"/>
    </location>
</feature>
<feature type="region of interest" description="Disordered" evidence="4">
    <location>
        <begin position="1"/>
        <end position="151"/>
    </location>
</feature>
<feature type="region of interest" description="Disordered" evidence="4">
    <location>
        <begin position="583"/>
        <end position="615"/>
    </location>
</feature>
<feature type="short sequence motif" description="Q motif">
    <location>
        <begin position="186"/>
        <end position="214"/>
    </location>
</feature>
<feature type="short sequence motif" description="DEAD box">
    <location>
        <begin position="354"/>
        <end position="357"/>
    </location>
</feature>
<feature type="compositionally biased region" description="Polar residues" evidence="4">
    <location>
        <begin position="10"/>
        <end position="26"/>
    </location>
</feature>
<feature type="compositionally biased region" description="Gly residues" evidence="4">
    <location>
        <begin position="586"/>
        <end position="601"/>
    </location>
</feature>
<feature type="binding site" evidence="2">
    <location>
        <begin position="230"/>
        <end position="237"/>
    </location>
    <ligand>
        <name>ATP</name>
        <dbReference type="ChEBI" id="CHEBI:30616"/>
    </ligand>
</feature>
<proteinExistence type="inferred from homology"/>
<protein>
    <recommendedName>
        <fullName>ATP-dependent RNA helicase ded1</fullName>
        <ecNumber>3.6.4.13</ecNumber>
    </recommendedName>
</protein>
<gene>
    <name type="primary">ded1</name>
    <name type="ORF">ATEG_05438</name>
</gene>
<dbReference type="EC" id="3.6.4.13"/>
<dbReference type="EMBL" id="CH476600">
    <property type="protein sequence ID" value="EAU34507.1"/>
    <property type="molecule type" value="Genomic_DNA"/>
</dbReference>
<dbReference type="RefSeq" id="XP_001214616.1">
    <property type="nucleotide sequence ID" value="XM_001214616.1"/>
</dbReference>
<dbReference type="SMR" id="Q0CLJ6"/>
<dbReference type="STRING" id="341663.Q0CLJ6"/>
<dbReference type="EnsemblFungi" id="EAU34507">
    <property type="protein sequence ID" value="EAU34507"/>
    <property type="gene ID" value="ATEG_05438"/>
</dbReference>
<dbReference type="GeneID" id="4321166"/>
<dbReference type="VEuPathDB" id="FungiDB:ATEG_05438"/>
<dbReference type="eggNOG" id="KOG0335">
    <property type="taxonomic scope" value="Eukaryota"/>
</dbReference>
<dbReference type="HOGENOM" id="CLU_003041_16_3_1"/>
<dbReference type="OMA" id="CYRSWVR"/>
<dbReference type="OrthoDB" id="196131at2759"/>
<dbReference type="Proteomes" id="UP000007963">
    <property type="component" value="Unassembled WGS sequence"/>
</dbReference>
<dbReference type="GO" id="GO:0010494">
    <property type="term" value="C:cytoplasmic stress granule"/>
    <property type="evidence" value="ECO:0007669"/>
    <property type="project" value="EnsemblFungi"/>
</dbReference>
<dbReference type="GO" id="GO:0005681">
    <property type="term" value="C:spliceosomal complex"/>
    <property type="evidence" value="ECO:0007669"/>
    <property type="project" value="EnsemblFungi"/>
</dbReference>
<dbReference type="GO" id="GO:0005524">
    <property type="term" value="F:ATP binding"/>
    <property type="evidence" value="ECO:0007669"/>
    <property type="project" value="UniProtKB-KW"/>
</dbReference>
<dbReference type="GO" id="GO:0016887">
    <property type="term" value="F:ATP hydrolysis activity"/>
    <property type="evidence" value="ECO:0007669"/>
    <property type="project" value="RHEA"/>
</dbReference>
<dbReference type="GO" id="GO:0031370">
    <property type="term" value="F:eukaryotic initiation factor 4G binding"/>
    <property type="evidence" value="ECO:0007669"/>
    <property type="project" value="EnsemblFungi"/>
</dbReference>
<dbReference type="GO" id="GO:0051880">
    <property type="term" value="F:G-quadruplex DNA binding"/>
    <property type="evidence" value="ECO:0007669"/>
    <property type="project" value="EnsemblFungi"/>
</dbReference>
<dbReference type="GO" id="GO:0002151">
    <property type="term" value="F:G-quadruplex RNA binding"/>
    <property type="evidence" value="ECO:0007669"/>
    <property type="project" value="EnsemblFungi"/>
</dbReference>
<dbReference type="GO" id="GO:0003729">
    <property type="term" value="F:mRNA binding"/>
    <property type="evidence" value="ECO:0007669"/>
    <property type="project" value="EnsemblFungi"/>
</dbReference>
<dbReference type="GO" id="GO:0003724">
    <property type="term" value="F:RNA helicase activity"/>
    <property type="evidence" value="ECO:0007669"/>
    <property type="project" value="UniProtKB-EC"/>
</dbReference>
<dbReference type="GO" id="GO:0033592">
    <property type="term" value="F:RNA strand annealing activity"/>
    <property type="evidence" value="ECO:0007669"/>
    <property type="project" value="EnsemblFungi"/>
</dbReference>
<dbReference type="GO" id="GO:0003743">
    <property type="term" value="F:translation initiation factor activity"/>
    <property type="evidence" value="ECO:0007669"/>
    <property type="project" value="UniProtKB-KW"/>
</dbReference>
<dbReference type="GO" id="GO:0002183">
    <property type="term" value="P:cytoplasmic translational initiation"/>
    <property type="evidence" value="ECO:0007669"/>
    <property type="project" value="EnsemblFungi"/>
</dbReference>
<dbReference type="GO" id="GO:1990625">
    <property type="term" value="P:negative regulation of cytoplasmic translational initiation in response to stress"/>
    <property type="evidence" value="ECO:0007669"/>
    <property type="project" value="EnsemblFungi"/>
</dbReference>
<dbReference type="GO" id="GO:1901195">
    <property type="term" value="P:positive regulation of formation of translation preinitiation complex"/>
    <property type="evidence" value="ECO:0007669"/>
    <property type="project" value="EnsemblFungi"/>
</dbReference>
<dbReference type="GO" id="GO:0031047">
    <property type="term" value="P:regulatory ncRNA-mediated gene silencing"/>
    <property type="evidence" value="ECO:0007669"/>
    <property type="project" value="EnsemblFungi"/>
</dbReference>
<dbReference type="GO" id="GO:0000390">
    <property type="term" value="P:spliceosomal complex disassembly"/>
    <property type="evidence" value="ECO:0007669"/>
    <property type="project" value="EnsemblFungi"/>
</dbReference>
<dbReference type="CDD" id="cd17967">
    <property type="entry name" value="DEADc_DDX3_DDX4"/>
    <property type="match status" value="1"/>
</dbReference>
<dbReference type="CDD" id="cd18787">
    <property type="entry name" value="SF2_C_DEAD"/>
    <property type="match status" value="1"/>
</dbReference>
<dbReference type="FunFam" id="3.40.50.300:FF:000160">
    <property type="entry name" value="ATP-dependent RNA helicase DDX3X"/>
    <property type="match status" value="1"/>
</dbReference>
<dbReference type="FunFam" id="3.40.50.300:FF:000008">
    <property type="entry name" value="ATP-dependent RNA helicase RhlB"/>
    <property type="match status" value="1"/>
</dbReference>
<dbReference type="Gene3D" id="3.40.50.300">
    <property type="entry name" value="P-loop containing nucleotide triphosphate hydrolases"/>
    <property type="match status" value="2"/>
</dbReference>
<dbReference type="InterPro" id="IPR011545">
    <property type="entry name" value="DEAD/DEAH_box_helicase_dom"/>
</dbReference>
<dbReference type="InterPro" id="IPR044763">
    <property type="entry name" value="Ded1/Dbp1_DEADc"/>
</dbReference>
<dbReference type="InterPro" id="IPR014001">
    <property type="entry name" value="Helicase_ATP-bd"/>
</dbReference>
<dbReference type="InterPro" id="IPR001650">
    <property type="entry name" value="Helicase_C-like"/>
</dbReference>
<dbReference type="InterPro" id="IPR027417">
    <property type="entry name" value="P-loop_NTPase"/>
</dbReference>
<dbReference type="InterPro" id="IPR000629">
    <property type="entry name" value="RNA-helicase_DEAD-box_CS"/>
</dbReference>
<dbReference type="InterPro" id="IPR014014">
    <property type="entry name" value="RNA_helicase_DEAD_Q_motif"/>
</dbReference>
<dbReference type="PANTHER" id="PTHR47958">
    <property type="entry name" value="ATP-DEPENDENT RNA HELICASE DBP3"/>
    <property type="match status" value="1"/>
</dbReference>
<dbReference type="Pfam" id="PF00270">
    <property type="entry name" value="DEAD"/>
    <property type="match status" value="1"/>
</dbReference>
<dbReference type="Pfam" id="PF00271">
    <property type="entry name" value="Helicase_C"/>
    <property type="match status" value="1"/>
</dbReference>
<dbReference type="SMART" id="SM00487">
    <property type="entry name" value="DEXDc"/>
    <property type="match status" value="1"/>
</dbReference>
<dbReference type="SMART" id="SM00490">
    <property type="entry name" value="HELICc"/>
    <property type="match status" value="1"/>
</dbReference>
<dbReference type="SUPFAM" id="SSF52540">
    <property type="entry name" value="P-loop containing nucleoside triphosphate hydrolases"/>
    <property type="match status" value="1"/>
</dbReference>
<dbReference type="PROSITE" id="PS00039">
    <property type="entry name" value="DEAD_ATP_HELICASE"/>
    <property type="match status" value="1"/>
</dbReference>
<dbReference type="PROSITE" id="PS51192">
    <property type="entry name" value="HELICASE_ATP_BIND_1"/>
    <property type="match status" value="1"/>
</dbReference>
<dbReference type="PROSITE" id="PS51194">
    <property type="entry name" value="HELICASE_CTER"/>
    <property type="match status" value="1"/>
</dbReference>
<dbReference type="PROSITE" id="PS51195">
    <property type="entry name" value="Q_MOTIF"/>
    <property type="match status" value="1"/>
</dbReference>